<name>RISB_RHOBA</name>
<sequence length="155" mass="16629">MPSIDGTTGNLPSGRVAIIASRYNANICDSMVQAALQSLSDAGIPEDKQWLIRVPGAWELCWAVEQAFQHADVIGAITLGCVIKGETTHDEHINRAVSDTLMEQAVRSGRPVGFGLLTCNTVEQAIQRSGGAVGNKGHEAADAMLEMLRLQTKMR</sequence>
<protein>
    <recommendedName>
        <fullName evidence="1">6,7-dimethyl-8-ribityllumazine synthase</fullName>
        <shortName evidence="1">DMRL synthase</shortName>
        <shortName evidence="1">LS</shortName>
        <shortName evidence="1">Lumazine synthase</shortName>
        <ecNumber evidence="1">2.5.1.78</ecNumber>
    </recommendedName>
</protein>
<organism>
    <name type="scientific">Rhodopirellula baltica (strain DSM 10527 / NCIMB 13988 / SH1)</name>
    <dbReference type="NCBI Taxonomy" id="243090"/>
    <lineage>
        <taxon>Bacteria</taxon>
        <taxon>Pseudomonadati</taxon>
        <taxon>Planctomycetota</taxon>
        <taxon>Planctomycetia</taxon>
        <taxon>Pirellulales</taxon>
        <taxon>Pirellulaceae</taxon>
        <taxon>Rhodopirellula</taxon>
    </lineage>
</organism>
<reference key="1">
    <citation type="journal article" date="2003" name="Proc. Natl. Acad. Sci. U.S.A.">
        <title>Complete genome sequence of the marine planctomycete Pirellula sp. strain 1.</title>
        <authorList>
            <person name="Gloeckner F.O."/>
            <person name="Kube M."/>
            <person name="Bauer M."/>
            <person name="Teeling H."/>
            <person name="Lombardot T."/>
            <person name="Ludwig W."/>
            <person name="Gade D."/>
            <person name="Beck A."/>
            <person name="Borzym K."/>
            <person name="Heitmann K."/>
            <person name="Rabus R."/>
            <person name="Schlesner H."/>
            <person name="Amann R."/>
            <person name="Reinhardt R."/>
        </authorList>
    </citation>
    <scope>NUCLEOTIDE SEQUENCE [LARGE SCALE GENOMIC DNA]</scope>
    <source>
        <strain>DSM 10527 / NCIMB 13988 / SH1</strain>
    </source>
</reference>
<accession>Q7UGV1</accession>
<dbReference type="EC" id="2.5.1.78" evidence="1"/>
<dbReference type="EMBL" id="BX294141">
    <property type="protein sequence ID" value="CAD78228.1"/>
    <property type="molecule type" value="Genomic_DNA"/>
</dbReference>
<dbReference type="RefSeq" id="NP_866447.1">
    <property type="nucleotide sequence ID" value="NC_005027.1"/>
</dbReference>
<dbReference type="RefSeq" id="WP_011120220.1">
    <property type="nucleotide sequence ID" value="NC_005027.1"/>
</dbReference>
<dbReference type="SMR" id="Q7UGV1"/>
<dbReference type="FunCoup" id="Q7UGV1">
    <property type="interactions" value="513"/>
</dbReference>
<dbReference type="STRING" id="243090.RB4995"/>
<dbReference type="EnsemblBacteria" id="CAD78228">
    <property type="protein sequence ID" value="CAD78228"/>
    <property type="gene ID" value="RB4995"/>
</dbReference>
<dbReference type="KEGG" id="rba:RB4995"/>
<dbReference type="PATRIC" id="fig|243090.15.peg.2388"/>
<dbReference type="eggNOG" id="COG0054">
    <property type="taxonomic scope" value="Bacteria"/>
</dbReference>
<dbReference type="HOGENOM" id="CLU_089358_1_2_0"/>
<dbReference type="InParanoid" id="Q7UGV1"/>
<dbReference type="OrthoDB" id="9809709at2"/>
<dbReference type="UniPathway" id="UPA00275">
    <property type="reaction ID" value="UER00404"/>
</dbReference>
<dbReference type="Proteomes" id="UP000001025">
    <property type="component" value="Chromosome"/>
</dbReference>
<dbReference type="GO" id="GO:0005737">
    <property type="term" value="C:cytoplasm"/>
    <property type="evidence" value="ECO:0000318"/>
    <property type="project" value="GO_Central"/>
</dbReference>
<dbReference type="GO" id="GO:0005829">
    <property type="term" value="C:cytosol"/>
    <property type="evidence" value="ECO:0000318"/>
    <property type="project" value="GO_Central"/>
</dbReference>
<dbReference type="GO" id="GO:0009349">
    <property type="term" value="C:riboflavin synthase complex"/>
    <property type="evidence" value="ECO:0007669"/>
    <property type="project" value="InterPro"/>
</dbReference>
<dbReference type="GO" id="GO:0000906">
    <property type="term" value="F:6,7-dimethyl-8-ribityllumazine synthase activity"/>
    <property type="evidence" value="ECO:0000318"/>
    <property type="project" value="GO_Central"/>
</dbReference>
<dbReference type="GO" id="GO:0009231">
    <property type="term" value="P:riboflavin biosynthetic process"/>
    <property type="evidence" value="ECO:0000318"/>
    <property type="project" value="GO_Central"/>
</dbReference>
<dbReference type="CDD" id="cd09209">
    <property type="entry name" value="Lumazine_synthase-I"/>
    <property type="match status" value="1"/>
</dbReference>
<dbReference type="Gene3D" id="3.40.50.960">
    <property type="entry name" value="Lumazine/riboflavin synthase"/>
    <property type="match status" value="1"/>
</dbReference>
<dbReference type="HAMAP" id="MF_00178">
    <property type="entry name" value="Lumazine_synth"/>
    <property type="match status" value="1"/>
</dbReference>
<dbReference type="InterPro" id="IPR034964">
    <property type="entry name" value="LS"/>
</dbReference>
<dbReference type="InterPro" id="IPR002180">
    <property type="entry name" value="LS/RS"/>
</dbReference>
<dbReference type="InterPro" id="IPR036467">
    <property type="entry name" value="LS/RS_sf"/>
</dbReference>
<dbReference type="NCBIfam" id="TIGR00114">
    <property type="entry name" value="lumazine-synth"/>
    <property type="match status" value="1"/>
</dbReference>
<dbReference type="PANTHER" id="PTHR21058:SF0">
    <property type="entry name" value="6,7-DIMETHYL-8-RIBITYLLUMAZINE SYNTHASE"/>
    <property type="match status" value="1"/>
</dbReference>
<dbReference type="PANTHER" id="PTHR21058">
    <property type="entry name" value="6,7-DIMETHYL-8-RIBITYLLUMAZINE SYNTHASE DMRL SYNTHASE LUMAZINE SYNTHASE"/>
    <property type="match status" value="1"/>
</dbReference>
<dbReference type="Pfam" id="PF00885">
    <property type="entry name" value="DMRL_synthase"/>
    <property type="match status" value="1"/>
</dbReference>
<dbReference type="SUPFAM" id="SSF52121">
    <property type="entry name" value="Lumazine synthase"/>
    <property type="match status" value="1"/>
</dbReference>
<keyword id="KW-1185">Reference proteome</keyword>
<keyword id="KW-0686">Riboflavin biosynthesis</keyword>
<keyword id="KW-0808">Transferase</keyword>
<comment type="function">
    <text evidence="1">Catalyzes the formation of 6,7-dimethyl-8-ribityllumazine by condensation of 5-amino-6-(D-ribitylamino)uracil with 3,4-dihydroxy-2-butanone 4-phosphate. This is the penultimate step in the biosynthesis of riboflavin.</text>
</comment>
<comment type="catalytic activity">
    <reaction evidence="1">
        <text>(2S)-2-hydroxy-3-oxobutyl phosphate + 5-amino-6-(D-ribitylamino)uracil = 6,7-dimethyl-8-(1-D-ribityl)lumazine + phosphate + 2 H2O + H(+)</text>
        <dbReference type="Rhea" id="RHEA:26152"/>
        <dbReference type="ChEBI" id="CHEBI:15377"/>
        <dbReference type="ChEBI" id="CHEBI:15378"/>
        <dbReference type="ChEBI" id="CHEBI:15934"/>
        <dbReference type="ChEBI" id="CHEBI:43474"/>
        <dbReference type="ChEBI" id="CHEBI:58201"/>
        <dbReference type="ChEBI" id="CHEBI:58830"/>
        <dbReference type="EC" id="2.5.1.78"/>
    </reaction>
</comment>
<comment type="pathway">
    <text evidence="1">Cofactor biosynthesis; riboflavin biosynthesis; riboflavin from 2-hydroxy-3-oxobutyl phosphate and 5-amino-6-(D-ribitylamino)uracil: step 1/2.</text>
</comment>
<comment type="similarity">
    <text evidence="1">Belongs to the DMRL synthase family.</text>
</comment>
<feature type="chain" id="PRO_0000134796" description="6,7-dimethyl-8-ribityllumazine synthase">
    <location>
        <begin position="1"/>
        <end position="155"/>
    </location>
</feature>
<feature type="active site" description="Proton donor" evidence="1">
    <location>
        <position position="89"/>
    </location>
</feature>
<feature type="binding site" evidence="1">
    <location>
        <position position="23"/>
    </location>
    <ligand>
        <name>5-amino-6-(D-ribitylamino)uracil</name>
        <dbReference type="ChEBI" id="CHEBI:15934"/>
    </ligand>
</feature>
<feature type="binding site" evidence="1">
    <location>
        <begin position="57"/>
        <end position="59"/>
    </location>
    <ligand>
        <name>5-amino-6-(D-ribitylamino)uracil</name>
        <dbReference type="ChEBI" id="CHEBI:15934"/>
    </ligand>
</feature>
<feature type="binding site" evidence="1">
    <location>
        <begin position="81"/>
        <end position="83"/>
    </location>
    <ligand>
        <name>5-amino-6-(D-ribitylamino)uracil</name>
        <dbReference type="ChEBI" id="CHEBI:15934"/>
    </ligand>
</feature>
<feature type="binding site" evidence="1">
    <location>
        <begin position="86"/>
        <end position="87"/>
    </location>
    <ligand>
        <name>(2S)-2-hydroxy-3-oxobutyl phosphate</name>
        <dbReference type="ChEBI" id="CHEBI:58830"/>
    </ligand>
</feature>
<feature type="binding site" evidence="1">
    <location>
        <position position="114"/>
    </location>
    <ligand>
        <name>5-amino-6-(D-ribitylamino)uracil</name>
        <dbReference type="ChEBI" id="CHEBI:15934"/>
    </ligand>
</feature>
<feature type="binding site" evidence="1">
    <location>
        <position position="128"/>
    </location>
    <ligand>
        <name>(2S)-2-hydroxy-3-oxobutyl phosphate</name>
        <dbReference type="ChEBI" id="CHEBI:58830"/>
    </ligand>
</feature>
<proteinExistence type="inferred from homology"/>
<gene>
    <name evidence="1" type="primary">ribH</name>
    <name type="ordered locus">RB4995</name>
</gene>
<evidence type="ECO:0000255" key="1">
    <source>
        <dbReference type="HAMAP-Rule" id="MF_00178"/>
    </source>
</evidence>